<organism>
    <name type="scientific">Shewanella sp. (strain MR-4)</name>
    <dbReference type="NCBI Taxonomy" id="60480"/>
    <lineage>
        <taxon>Bacteria</taxon>
        <taxon>Pseudomonadati</taxon>
        <taxon>Pseudomonadota</taxon>
        <taxon>Gammaproteobacteria</taxon>
        <taxon>Alteromonadales</taxon>
        <taxon>Shewanellaceae</taxon>
        <taxon>Shewanella</taxon>
    </lineage>
</organism>
<dbReference type="EMBL" id="CP000446">
    <property type="protein sequence ID" value="ABI39937.1"/>
    <property type="molecule type" value="Genomic_DNA"/>
</dbReference>
<dbReference type="RefSeq" id="WP_011623616.1">
    <property type="nucleotide sequence ID" value="NC_008321.1"/>
</dbReference>
<dbReference type="SMR" id="Q0HG80"/>
<dbReference type="KEGG" id="she:Shewmr4_2866"/>
<dbReference type="HOGENOM" id="CLU_086669_0_0_6"/>
<dbReference type="GO" id="GO:0005737">
    <property type="term" value="C:cytoplasm"/>
    <property type="evidence" value="ECO:0007669"/>
    <property type="project" value="UniProtKB-SubCell"/>
</dbReference>
<dbReference type="GO" id="GO:0003677">
    <property type="term" value="F:DNA binding"/>
    <property type="evidence" value="ECO:0007669"/>
    <property type="project" value="InterPro"/>
</dbReference>
<dbReference type="GO" id="GO:0004519">
    <property type="term" value="F:endonuclease activity"/>
    <property type="evidence" value="ECO:0007669"/>
    <property type="project" value="UniProtKB-UniRule"/>
</dbReference>
<dbReference type="GO" id="GO:0006304">
    <property type="term" value="P:DNA modification"/>
    <property type="evidence" value="ECO:0007669"/>
    <property type="project" value="InterPro"/>
</dbReference>
<dbReference type="GO" id="GO:0006298">
    <property type="term" value="P:mismatch repair"/>
    <property type="evidence" value="ECO:0007669"/>
    <property type="project" value="UniProtKB-UniRule"/>
</dbReference>
<dbReference type="CDD" id="cd00583">
    <property type="entry name" value="MutH-like"/>
    <property type="match status" value="1"/>
</dbReference>
<dbReference type="Gene3D" id="3.40.600.10">
    <property type="entry name" value="DNA mismatch repair MutH/Restriction endonuclease, type II"/>
    <property type="match status" value="1"/>
</dbReference>
<dbReference type="HAMAP" id="MF_00759">
    <property type="entry name" value="MutH"/>
    <property type="match status" value="1"/>
</dbReference>
<dbReference type="InterPro" id="IPR004230">
    <property type="entry name" value="DNA_mismatch_repair_MutH"/>
</dbReference>
<dbReference type="InterPro" id="IPR011337">
    <property type="entry name" value="DNA_rep_MutH/RE_typeII_Sau3AI"/>
</dbReference>
<dbReference type="InterPro" id="IPR037057">
    <property type="entry name" value="DNA_rep_MutH/T2_RE_sf"/>
</dbReference>
<dbReference type="InterPro" id="IPR011335">
    <property type="entry name" value="Restrct_endonuc-II-like"/>
</dbReference>
<dbReference type="NCBIfam" id="TIGR02248">
    <property type="entry name" value="mutH_TIGR"/>
    <property type="match status" value="1"/>
</dbReference>
<dbReference type="NCBIfam" id="NF003458">
    <property type="entry name" value="PRK05070.1"/>
    <property type="match status" value="1"/>
</dbReference>
<dbReference type="Pfam" id="PF02976">
    <property type="entry name" value="MutH"/>
    <property type="match status" value="1"/>
</dbReference>
<dbReference type="SMART" id="SM00927">
    <property type="entry name" value="MutH"/>
    <property type="match status" value="1"/>
</dbReference>
<dbReference type="SUPFAM" id="SSF52980">
    <property type="entry name" value="Restriction endonuclease-like"/>
    <property type="match status" value="1"/>
</dbReference>
<comment type="function">
    <text evidence="1">Sequence-specific endonuclease that cleaves unmethylated GATC sequences. It is involved in DNA mismatch repair.</text>
</comment>
<comment type="subcellular location">
    <subcellularLocation>
        <location evidence="1">Cytoplasm</location>
    </subcellularLocation>
</comment>
<comment type="similarity">
    <text evidence="1">Belongs to the MutH family.</text>
</comment>
<reference key="1">
    <citation type="submission" date="2006-08" db="EMBL/GenBank/DDBJ databases">
        <title>Complete sequence of Shewanella sp. MR-4.</title>
        <authorList>
            <consortium name="US DOE Joint Genome Institute"/>
            <person name="Copeland A."/>
            <person name="Lucas S."/>
            <person name="Lapidus A."/>
            <person name="Barry K."/>
            <person name="Detter J.C."/>
            <person name="Glavina del Rio T."/>
            <person name="Hammon N."/>
            <person name="Israni S."/>
            <person name="Dalin E."/>
            <person name="Tice H."/>
            <person name="Pitluck S."/>
            <person name="Kiss H."/>
            <person name="Brettin T."/>
            <person name="Bruce D."/>
            <person name="Han C."/>
            <person name="Tapia R."/>
            <person name="Gilna P."/>
            <person name="Schmutz J."/>
            <person name="Larimer F."/>
            <person name="Land M."/>
            <person name="Hauser L."/>
            <person name="Kyrpides N."/>
            <person name="Mikhailova N."/>
            <person name="Nealson K."/>
            <person name="Konstantinidis K."/>
            <person name="Klappenbach J."/>
            <person name="Tiedje J."/>
            <person name="Richardson P."/>
        </authorList>
    </citation>
    <scope>NUCLEOTIDE SEQUENCE [LARGE SCALE GENOMIC DNA]</scope>
    <source>
        <strain>MR-4</strain>
    </source>
</reference>
<evidence type="ECO:0000255" key="1">
    <source>
        <dbReference type="HAMAP-Rule" id="MF_00759"/>
    </source>
</evidence>
<keyword id="KW-0963">Cytoplasm</keyword>
<keyword id="KW-0227">DNA damage</keyword>
<keyword id="KW-0234">DNA repair</keyword>
<keyword id="KW-0255">Endonuclease</keyword>
<keyword id="KW-0378">Hydrolase</keyword>
<keyword id="KW-0540">Nuclease</keyword>
<gene>
    <name evidence="1" type="primary">mutH</name>
    <name type="ordered locus">Shewmr4_2866</name>
</gene>
<proteinExistence type="inferred from homology"/>
<name>MUTH_SHESM</name>
<feature type="chain" id="PRO_1000046710" description="DNA mismatch repair protein MutH">
    <location>
        <begin position="1"/>
        <end position="223"/>
    </location>
</feature>
<accession>Q0HG80</accession>
<sequence>MKPIIPPQNLSELLERANMMAGISLAQIAAHRGITVPKDLKRDKGWVGQLIEMELGATAGSKPEQDFLHLGVELKTIPIDSKGKPLETTYVCVAPLTNIEGLTWQDSLVCHKLQRVLWVPVEGERHIPVGDRRVGTPILWEPDLQEQRLLQQDWEEIMELIALGKVEKLTARHGEVLQLRPKAANSKALTQSIAEDGSLKMTNPRGFYLKTAFTAMLLNKVFG</sequence>
<protein>
    <recommendedName>
        <fullName evidence="1">DNA mismatch repair protein MutH</fullName>
    </recommendedName>
    <alternativeName>
        <fullName evidence="1">Methyl-directed mismatch repair protein</fullName>
    </alternativeName>
</protein>